<comment type="function">
    <text evidence="1">May have anti-apoptotic activity.</text>
</comment>
<comment type="alternative products">
    <event type="alternative splicing"/>
    <isoform>
        <id>Q6P132-1</id>
        <name>1</name>
        <sequence type="displayed"/>
    </isoform>
    <isoform>
        <id>Q6P132-2</id>
        <name>2</name>
        <sequence type="described" ref="VSP_037667"/>
    </isoform>
</comment>
<comment type="tissue specificity">
    <text evidence="6">Expressed at relatively high levels in both proximal and distal regions of the fin bud during pectoral fin development.</text>
</comment>
<comment type="domain">
    <text evidence="2">The C-terminal UBZ-type zinc fingers function as ubiquitin-binding domains.</text>
</comment>
<comment type="sequence caution" evidence="8">
    <conflict type="erroneous initiation">
        <sequence resource="EMBL-CDS" id="AAH60918"/>
    </conflict>
</comment>
<comment type="sequence caution" evidence="8">
    <conflict type="erroneous initiation">
        <sequence resource="EMBL-CDS" id="AAH65315"/>
    </conflict>
</comment>
<dbReference type="EMBL" id="BC060918">
    <property type="protein sequence ID" value="AAH60918.1"/>
    <property type="status" value="ALT_INIT"/>
    <property type="molecule type" value="mRNA"/>
</dbReference>
<dbReference type="EMBL" id="BC065315">
    <property type="protein sequence ID" value="AAH65315.1"/>
    <property type="status" value="ALT_INIT"/>
    <property type="molecule type" value="mRNA"/>
</dbReference>
<dbReference type="RefSeq" id="NP_001417903.1">
    <molecule id="Q6P132-2"/>
    <property type="nucleotide sequence ID" value="NM_001430974.1"/>
</dbReference>
<dbReference type="RefSeq" id="NP_997829.2">
    <molecule id="Q6P132-1"/>
    <property type="nucleotide sequence ID" value="NM_212664.2"/>
</dbReference>
<dbReference type="RefSeq" id="XP_021322295.1">
    <molecule id="Q6P132-1"/>
    <property type="nucleotide sequence ID" value="XM_021466620.2"/>
</dbReference>
<dbReference type="SMR" id="Q6P132"/>
<dbReference type="FunCoup" id="Q6P132">
    <property type="interactions" value="1137"/>
</dbReference>
<dbReference type="STRING" id="7955.ENSDARP00000040726"/>
<dbReference type="PaxDb" id="7955-ENSDARP00000040726"/>
<dbReference type="GeneID" id="324152"/>
<dbReference type="KEGG" id="dre:324152"/>
<dbReference type="AGR" id="ZFIN:ZDB-GENE-030131-2872"/>
<dbReference type="CTD" id="324152"/>
<dbReference type="ZFIN" id="ZDB-GENE-030131-2872">
    <property type="gene designation" value="tax1bp1b"/>
</dbReference>
<dbReference type="eggNOG" id="ENOG502QQ1D">
    <property type="taxonomic scope" value="Eukaryota"/>
</dbReference>
<dbReference type="InParanoid" id="Q6P132"/>
<dbReference type="OrthoDB" id="10015001at2759"/>
<dbReference type="PhylomeDB" id="Q6P132"/>
<dbReference type="TreeFam" id="TF329501"/>
<dbReference type="PRO" id="PR:Q6P132"/>
<dbReference type="Proteomes" id="UP000000437">
    <property type="component" value="Chromosome 16"/>
</dbReference>
<dbReference type="Bgee" id="ENSDARG00000056856">
    <property type="expression patterns" value="Expressed in caudal fin and 28 other cell types or tissues"/>
</dbReference>
<dbReference type="ExpressionAtlas" id="Q6P132">
    <property type="expression patterns" value="baseline"/>
</dbReference>
<dbReference type="GO" id="GO:0008270">
    <property type="term" value="F:zinc ion binding"/>
    <property type="evidence" value="ECO:0007669"/>
    <property type="project" value="UniProtKB-KW"/>
</dbReference>
<dbReference type="GO" id="GO:0006915">
    <property type="term" value="P:apoptotic process"/>
    <property type="evidence" value="ECO:0007669"/>
    <property type="project" value="UniProtKB-KW"/>
</dbReference>
<dbReference type="CDD" id="cd21969">
    <property type="entry name" value="Zn-C2H2_TAX1BP1_rpt1"/>
    <property type="match status" value="1"/>
</dbReference>
<dbReference type="CDD" id="cd21970">
    <property type="entry name" value="Zn-C2H2_TAX1BP1_rpt2"/>
    <property type="match status" value="1"/>
</dbReference>
<dbReference type="FunFam" id="2.60.40.2840:FF:000002">
    <property type="entry name" value="Tax1-binding protein 1 isoform 2"/>
    <property type="match status" value="1"/>
</dbReference>
<dbReference type="Gene3D" id="2.60.40.2840">
    <property type="match status" value="1"/>
</dbReference>
<dbReference type="Gene3D" id="6.20.250.40">
    <property type="match status" value="1"/>
</dbReference>
<dbReference type="InterPro" id="IPR012852">
    <property type="entry name" value="CALCOCO1-like"/>
</dbReference>
<dbReference type="InterPro" id="IPR041641">
    <property type="entry name" value="CALCOCO1/2_Zn_UBZ1"/>
</dbReference>
<dbReference type="InterPro" id="IPR041611">
    <property type="entry name" value="SKICH"/>
</dbReference>
<dbReference type="InterPro" id="IPR051002">
    <property type="entry name" value="UBA_autophagy_assoc_protein"/>
</dbReference>
<dbReference type="PANTHER" id="PTHR31915">
    <property type="entry name" value="SKICH DOMAIN-CONTAINING PROTEIN"/>
    <property type="match status" value="1"/>
</dbReference>
<dbReference type="PANTHER" id="PTHR31915:SF8">
    <property type="entry name" value="TAX1-BINDING PROTEIN 1"/>
    <property type="match status" value="1"/>
</dbReference>
<dbReference type="Pfam" id="PF07888">
    <property type="entry name" value="CALCOCO1"/>
    <property type="match status" value="1"/>
</dbReference>
<dbReference type="Pfam" id="PF17751">
    <property type="entry name" value="SKICH"/>
    <property type="match status" value="1"/>
</dbReference>
<dbReference type="Pfam" id="PF18112">
    <property type="entry name" value="Zn-C2H2_12"/>
    <property type="match status" value="2"/>
</dbReference>
<dbReference type="PROSITE" id="PS51905">
    <property type="entry name" value="ZF_UBZ1"/>
    <property type="match status" value="2"/>
</dbReference>
<sequence length="823" mass="94511">MALFLEGTAASSAMETSNFAHVIFQNVGKSYLPHGALECHYTLTQFIKPHPKDWVGIFKVGWSTARDYYTFLWSPLPDNYTEGTAINRSVVFQGYYVPNDDGEFYQFCYVTHKGEIRGASTPFQFRANSPTEEELLTMEDEGGSDILVVTTKASYLEQKMEQIQQEKKELLENLDLLQKERDELIDEKNRLEKEYEQERESSAQLRKDVQELQLSAQSLQEEREEVKRRMEESTARLLQLEEDLIGVTQKGLQKETELDCLKDRVKKLNLEKEALEGQLKNEKDEKELYKIHLKNRELENTKLSAELQMLKSVDVNKENTIAQLKDELARVKSCLAEKEKQHRQLLANSSPSGESKALREQLRQKEEQLQATQQQANMLKAELRDSSNARDRSMAELYRIRVEAETLKKGQADARAECSRLEQQLEEMKSSTQQEAQCKESDVLAVAELQREVEDLRLRLQMAAEHYKDKYKECQKLQKQVVKFNEQQGVKRSPGSDAAAGPLSASPEASAPGSPSTSDAVLDAIIHGRLKSSSKELDKNDKYRKCKQMLNEERERCSMITDELTKMEVKLREQMKTNESLRMQLAAEEDRYKSQVAEKGRELKELKDSLFVLTKEKEKLEGQLQKSVNREEEQKDSNLDVQSVFLQYPMPYAQDDPSPLLVPQRPTDLLFGNPYSSTDSRDGADGEFSDDQMPRLPPVGPPSWDSNVVCIQPARNLSRPDGLEEPEEPQSTQNDDEPAAPEPAEFLNDGQMPFCFEPTGEQKRCPLCEVIFPPHYDQSKFEEHVESHWKICPMCSEQFPLDCDQQLFEKHVLTHFDSNVLNF</sequence>
<accession>Q6P132</accession>
<accession>Q6P958</accession>
<protein>
    <recommendedName>
        <fullName>Tax1-binding protein 1 homolog B</fullName>
    </recommendedName>
</protein>
<evidence type="ECO:0000250" key="1"/>
<evidence type="ECO:0000250" key="2">
    <source>
        <dbReference type="UniProtKB" id="Q86VP1"/>
    </source>
</evidence>
<evidence type="ECO:0000255" key="3"/>
<evidence type="ECO:0000255" key="4">
    <source>
        <dbReference type="PROSITE-ProRule" id="PRU01253"/>
    </source>
</evidence>
<evidence type="ECO:0000256" key="5">
    <source>
        <dbReference type="SAM" id="MobiDB-lite"/>
    </source>
</evidence>
<evidence type="ECO:0000269" key="6">
    <source>
    </source>
</evidence>
<evidence type="ECO:0000303" key="7">
    <source ref="1"/>
</evidence>
<evidence type="ECO:0000305" key="8"/>
<gene>
    <name type="primary">tax1bp1b</name>
    <name type="synonym">tax1bp1</name>
    <name type="ORF">zgc:77129</name>
</gene>
<reference key="1">
    <citation type="submission" date="2004-01" db="EMBL/GenBank/DDBJ databases">
        <authorList>
            <consortium name="NIH - Zebrafish Gene Collection (ZGC) project"/>
        </authorList>
    </citation>
    <scope>NUCLEOTIDE SEQUENCE [LARGE SCALE MRNA] (ISOFORMS 1 AND 2)</scope>
    <source>
        <tissue>Kidney</tissue>
        <tissue>Retina</tissue>
    </source>
</reference>
<reference key="2">
    <citation type="journal article" date="2008" name="Dev. Biol.">
        <title>Tri-phasic expression of posterior Hox genes during development of pectoral fins in zebrafish: implications for the evolution of vertebrate paired appendages.</title>
        <authorList>
            <person name="Ahn D."/>
            <person name="Ho R.K."/>
        </authorList>
    </citation>
    <scope>TISSUE SPECIFICITY</scope>
</reference>
<keyword id="KW-0025">Alternative splicing</keyword>
<keyword id="KW-0053">Apoptosis</keyword>
<keyword id="KW-0175">Coiled coil</keyword>
<keyword id="KW-0479">Metal-binding</keyword>
<keyword id="KW-1185">Reference proteome</keyword>
<keyword id="KW-0677">Repeat</keyword>
<keyword id="KW-0862">Zinc</keyword>
<keyword id="KW-0863">Zinc-finger</keyword>
<feature type="chain" id="PRO_0000234558" description="Tax1-binding protein 1 homolog B">
    <location>
        <begin position="1"/>
        <end position="823"/>
    </location>
</feature>
<feature type="zinc finger region" description="UBZ1-type 1" evidence="4">
    <location>
        <begin position="762"/>
        <end position="788"/>
    </location>
</feature>
<feature type="zinc finger region" description="UBZ1-type 2" evidence="4">
    <location>
        <begin position="789"/>
        <end position="815"/>
    </location>
</feature>
<feature type="region of interest" description="Disordered" evidence="5">
    <location>
        <begin position="342"/>
        <end position="377"/>
    </location>
</feature>
<feature type="region of interest" description="Disordered" evidence="5">
    <location>
        <begin position="486"/>
        <end position="519"/>
    </location>
</feature>
<feature type="region of interest" description="Disordered" evidence="5">
    <location>
        <begin position="650"/>
        <end position="746"/>
    </location>
</feature>
<feature type="coiled-coil region" evidence="3">
    <location>
        <begin position="149"/>
        <end position="487"/>
    </location>
</feature>
<feature type="coiled-coil region" evidence="3">
    <location>
        <begin position="548"/>
        <end position="638"/>
    </location>
</feature>
<feature type="compositionally biased region" description="Basic and acidic residues" evidence="5">
    <location>
        <begin position="356"/>
        <end position="368"/>
    </location>
</feature>
<feature type="compositionally biased region" description="Low complexity" evidence="5">
    <location>
        <begin position="498"/>
        <end position="518"/>
    </location>
</feature>
<feature type="compositionally biased region" description="Acidic residues" evidence="5">
    <location>
        <begin position="723"/>
        <end position="739"/>
    </location>
</feature>
<feature type="binding site" evidence="4">
    <location>
        <position position="765"/>
    </location>
    <ligand>
        <name>Zn(2+)</name>
        <dbReference type="ChEBI" id="CHEBI:29105"/>
        <label>1</label>
    </ligand>
</feature>
<feature type="binding site" evidence="4">
    <location>
        <position position="768"/>
    </location>
    <ligand>
        <name>Zn(2+)</name>
        <dbReference type="ChEBI" id="CHEBI:29105"/>
        <label>1</label>
    </ligand>
</feature>
<feature type="binding site" evidence="4">
    <location>
        <position position="784"/>
    </location>
    <ligand>
        <name>Zn(2+)</name>
        <dbReference type="ChEBI" id="CHEBI:29105"/>
        <label>1</label>
    </ligand>
</feature>
<feature type="binding site" evidence="4">
    <location>
        <position position="788"/>
    </location>
    <ligand>
        <name>Zn(2+)</name>
        <dbReference type="ChEBI" id="CHEBI:29105"/>
        <label>1</label>
    </ligand>
</feature>
<feature type="binding site" evidence="4">
    <location>
        <position position="792"/>
    </location>
    <ligand>
        <name>Zn(2+)</name>
        <dbReference type="ChEBI" id="CHEBI:29105"/>
        <label>2</label>
    </ligand>
</feature>
<feature type="binding site" evidence="4">
    <location>
        <position position="795"/>
    </location>
    <ligand>
        <name>Zn(2+)</name>
        <dbReference type="ChEBI" id="CHEBI:29105"/>
        <label>2</label>
    </ligand>
</feature>
<feature type="binding site" evidence="4">
    <location>
        <position position="811"/>
    </location>
    <ligand>
        <name>Zn(2+)</name>
        <dbReference type="ChEBI" id="CHEBI:29105"/>
        <label>2</label>
    </ligand>
</feature>
<feature type="binding site" evidence="4">
    <location>
        <position position="815"/>
    </location>
    <ligand>
        <name>Zn(2+)</name>
        <dbReference type="ChEBI" id="CHEBI:29105"/>
        <label>2</label>
    </ligand>
</feature>
<feature type="splice variant" id="VSP_037667" description="In isoform 2." evidence="7">
    <location>
        <position position="623"/>
    </location>
</feature>
<feature type="sequence conflict" description="In Ref. 1; AAH65315." evidence="8" ref="1">
    <original>E</original>
    <variation>D</variation>
    <location>
        <position position="139"/>
    </location>
</feature>
<feature type="sequence conflict" description="In Ref. 1; AAH65315." evidence="8" ref="1">
    <original>R</original>
    <variation>K</variation>
    <location>
        <position position="415"/>
    </location>
</feature>
<feature type="sequence conflict" description="In Ref. 1; AAH65315." evidence="8" ref="1">
    <original>Q</original>
    <variation>H</variation>
    <location>
        <position position="434"/>
    </location>
</feature>
<feature type="sequence conflict" description="In Ref. 1; AAH65315." evidence="8" ref="1">
    <original>N</original>
    <variation>S</variation>
    <location>
        <position position="485"/>
    </location>
</feature>
<name>TXB1B_DANRE</name>
<organism>
    <name type="scientific">Danio rerio</name>
    <name type="common">Zebrafish</name>
    <name type="synonym">Brachydanio rerio</name>
    <dbReference type="NCBI Taxonomy" id="7955"/>
    <lineage>
        <taxon>Eukaryota</taxon>
        <taxon>Metazoa</taxon>
        <taxon>Chordata</taxon>
        <taxon>Craniata</taxon>
        <taxon>Vertebrata</taxon>
        <taxon>Euteleostomi</taxon>
        <taxon>Actinopterygii</taxon>
        <taxon>Neopterygii</taxon>
        <taxon>Teleostei</taxon>
        <taxon>Ostariophysi</taxon>
        <taxon>Cypriniformes</taxon>
        <taxon>Danionidae</taxon>
        <taxon>Danioninae</taxon>
        <taxon>Danio</taxon>
    </lineage>
</organism>
<proteinExistence type="evidence at transcript level"/>